<reference key="1">
    <citation type="journal article" date="1997" name="Nature">
        <title>Molecular basis of symbiosis between Rhizobium and legumes.</title>
        <authorList>
            <person name="Freiberg C.A."/>
            <person name="Fellay R."/>
            <person name="Bairoch A."/>
            <person name="Broughton W.J."/>
            <person name="Rosenthal A."/>
            <person name="Perret X."/>
        </authorList>
    </citation>
    <scope>NUCLEOTIDE SEQUENCE [LARGE SCALE GENOMIC DNA]</scope>
    <source>
        <strain>NBRC 101917 / NGR234</strain>
    </source>
</reference>
<reference key="2">
    <citation type="journal article" date="2009" name="Appl. Environ. Microbiol.">
        <title>Rhizobium sp. strain NGR234 possesses a remarkable number of secretion systems.</title>
        <authorList>
            <person name="Schmeisser C."/>
            <person name="Liesegang H."/>
            <person name="Krysciak D."/>
            <person name="Bakkou N."/>
            <person name="Le Quere A."/>
            <person name="Wollherr A."/>
            <person name="Heinemeyer I."/>
            <person name="Morgenstern B."/>
            <person name="Pommerening-Roeser A."/>
            <person name="Flores M."/>
            <person name="Palacios R."/>
            <person name="Brenner S."/>
            <person name="Gottschalk G."/>
            <person name="Schmitz R.A."/>
            <person name="Broughton W.J."/>
            <person name="Perret X."/>
            <person name="Strittmatter A.W."/>
            <person name="Streit W.R."/>
        </authorList>
    </citation>
    <scope>NUCLEOTIDE SEQUENCE [LARGE SCALE GENOMIC DNA]</scope>
    <source>
        <strain>NBRC 101917 / NGR234</strain>
    </source>
</reference>
<geneLocation type="plasmid">
    <name>sym pNGR234a</name>
</geneLocation>
<organism>
    <name type="scientific">Sinorhizobium fredii (strain NBRC 101917 / NGR234)</name>
    <dbReference type="NCBI Taxonomy" id="394"/>
    <lineage>
        <taxon>Bacteria</taxon>
        <taxon>Pseudomonadati</taxon>
        <taxon>Pseudomonadota</taxon>
        <taxon>Alphaproteobacteria</taxon>
        <taxon>Hyphomicrobiales</taxon>
        <taxon>Rhizobiaceae</taxon>
        <taxon>Sinorhizobium/Ensifer group</taxon>
        <taxon>Sinorhizobium</taxon>
    </lineage>
</organism>
<name>Y4TH_SINFN</name>
<accession>P55662</accession>
<keyword id="KW-0029">Amino-acid transport</keyword>
<keyword id="KW-0067">ATP-binding</keyword>
<keyword id="KW-0997">Cell inner membrane</keyword>
<keyword id="KW-1003">Cell membrane</keyword>
<keyword id="KW-0472">Membrane</keyword>
<keyword id="KW-0547">Nucleotide-binding</keyword>
<keyword id="KW-0614">Plasmid</keyword>
<keyword id="KW-1185">Reference proteome</keyword>
<keyword id="KW-0813">Transport</keyword>
<protein>
    <recommendedName>
        <fullName>Probable amino-acid ABC transporter ATP-binding protein y4tH</fullName>
    </recommendedName>
</protein>
<dbReference type="EMBL" id="U00090">
    <property type="protein sequence ID" value="AAB91861.1"/>
    <property type="molecule type" value="Genomic_DNA"/>
</dbReference>
<dbReference type="RefSeq" id="NP_444074.1">
    <property type="nucleotide sequence ID" value="NC_000914.2"/>
</dbReference>
<dbReference type="RefSeq" id="WP_010875189.1">
    <property type="nucleotide sequence ID" value="NC_000914.2"/>
</dbReference>
<dbReference type="SMR" id="P55662"/>
<dbReference type="KEGG" id="rhi:NGR_a01510"/>
<dbReference type="PATRIC" id="fig|394.7.peg.137"/>
<dbReference type="eggNOG" id="COG1126">
    <property type="taxonomic scope" value="Bacteria"/>
</dbReference>
<dbReference type="HOGENOM" id="CLU_000604_1_22_5"/>
<dbReference type="OrthoDB" id="9802264at2"/>
<dbReference type="Proteomes" id="UP000001054">
    <property type="component" value="Plasmid pNGR234a"/>
</dbReference>
<dbReference type="GO" id="GO:0005886">
    <property type="term" value="C:plasma membrane"/>
    <property type="evidence" value="ECO:0007669"/>
    <property type="project" value="UniProtKB-SubCell"/>
</dbReference>
<dbReference type="GO" id="GO:0015424">
    <property type="term" value="F:ABC-type amino acid transporter activity"/>
    <property type="evidence" value="ECO:0007669"/>
    <property type="project" value="InterPro"/>
</dbReference>
<dbReference type="GO" id="GO:0005524">
    <property type="term" value="F:ATP binding"/>
    <property type="evidence" value="ECO:0007669"/>
    <property type="project" value="UniProtKB-KW"/>
</dbReference>
<dbReference type="GO" id="GO:0016887">
    <property type="term" value="F:ATP hydrolysis activity"/>
    <property type="evidence" value="ECO:0007669"/>
    <property type="project" value="InterPro"/>
</dbReference>
<dbReference type="CDD" id="cd03262">
    <property type="entry name" value="ABC_HisP_GlnQ"/>
    <property type="match status" value="1"/>
</dbReference>
<dbReference type="FunFam" id="3.40.50.300:FF:000020">
    <property type="entry name" value="Amino acid ABC transporter ATP-binding component"/>
    <property type="match status" value="1"/>
</dbReference>
<dbReference type="Gene3D" id="3.40.50.300">
    <property type="entry name" value="P-loop containing nucleotide triphosphate hydrolases"/>
    <property type="match status" value="1"/>
</dbReference>
<dbReference type="InterPro" id="IPR003593">
    <property type="entry name" value="AAA+_ATPase"/>
</dbReference>
<dbReference type="InterPro" id="IPR030679">
    <property type="entry name" value="ABC_ATPase_HisP-typ"/>
</dbReference>
<dbReference type="InterPro" id="IPR003439">
    <property type="entry name" value="ABC_transporter-like_ATP-bd"/>
</dbReference>
<dbReference type="InterPro" id="IPR017871">
    <property type="entry name" value="ABC_transporter-like_CS"/>
</dbReference>
<dbReference type="InterPro" id="IPR014343">
    <property type="entry name" value="Ectoine_EhuA"/>
</dbReference>
<dbReference type="InterPro" id="IPR050086">
    <property type="entry name" value="MetN_ABC_transporter-like"/>
</dbReference>
<dbReference type="InterPro" id="IPR027417">
    <property type="entry name" value="P-loop_NTPase"/>
</dbReference>
<dbReference type="NCBIfam" id="TIGR03005">
    <property type="entry name" value="ectoine_ehuA"/>
    <property type="match status" value="1"/>
</dbReference>
<dbReference type="PANTHER" id="PTHR43166">
    <property type="entry name" value="AMINO ACID IMPORT ATP-BINDING PROTEIN"/>
    <property type="match status" value="1"/>
</dbReference>
<dbReference type="PANTHER" id="PTHR43166:SF9">
    <property type="entry name" value="GLUTAMATE_ASPARTATE IMPORT ATP-BINDING PROTEIN GLTL"/>
    <property type="match status" value="1"/>
</dbReference>
<dbReference type="Pfam" id="PF00005">
    <property type="entry name" value="ABC_tran"/>
    <property type="match status" value="1"/>
</dbReference>
<dbReference type="PIRSF" id="PIRSF039085">
    <property type="entry name" value="ABC_ATPase_HisP"/>
    <property type="match status" value="1"/>
</dbReference>
<dbReference type="SMART" id="SM00382">
    <property type="entry name" value="AAA"/>
    <property type="match status" value="1"/>
</dbReference>
<dbReference type="SUPFAM" id="SSF52540">
    <property type="entry name" value="P-loop containing nucleoside triphosphate hydrolases"/>
    <property type="match status" value="1"/>
</dbReference>
<dbReference type="PROSITE" id="PS00211">
    <property type="entry name" value="ABC_TRANSPORTER_1"/>
    <property type="match status" value="1"/>
</dbReference>
<dbReference type="PROSITE" id="PS50893">
    <property type="entry name" value="ABC_TRANSPORTER_2"/>
    <property type="match status" value="1"/>
</dbReference>
<comment type="function">
    <text>Probably part of a binding-protein-dependent transport system y4tEFGH for an amino acid. Probably responsible for energy coupling to the transport system.</text>
</comment>
<comment type="subcellular location">
    <subcellularLocation>
        <location evidence="1">Cell inner membrane</location>
        <topology evidence="1">Peripheral membrane protein</topology>
    </subcellularLocation>
</comment>
<comment type="similarity">
    <text evidence="3">Belongs to the ABC transporter superfamily.</text>
</comment>
<feature type="chain" id="PRO_0000093274" description="Probable amino-acid ABC transporter ATP-binding protein y4tH">
    <location>
        <begin position="1"/>
        <end position="257"/>
    </location>
</feature>
<feature type="domain" description="ABC transporter" evidence="2">
    <location>
        <begin position="6"/>
        <end position="251"/>
    </location>
</feature>
<feature type="binding site" evidence="2">
    <location>
        <begin position="38"/>
        <end position="45"/>
    </location>
    <ligand>
        <name>ATP</name>
        <dbReference type="ChEBI" id="CHEBI:30616"/>
    </ligand>
</feature>
<gene>
    <name type="ordered locus">NGR_a01510</name>
    <name type="ORF">y4tH</name>
</gene>
<sequence>MSDSIIVFDKVKKAYGNFTVINELDFEVRRGEKVSIIGPSGSGKSTVLRILMTLEGINDGAVYVGGEPLWHELKNGSMMPATEKHLRKMRTQLGMVFQQFNLFPHMTVLRNLTEAPRVVLGLSKEEARRRAEELLELVGLVDHAHKFPAQLSGGQQQRVGIARALAMRPKIMLFDEPTSALDPELVGEVLNVIRRLAAEHDLTMLMVTHEMRFAREISDRVCFFDKGRIREEGTPEQLFSQPKEERTREFLKAVLDG</sequence>
<evidence type="ECO:0000250" key="1"/>
<evidence type="ECO:0000255" key="2">
    <source>
        <dbReference type="PROSITE-ProRule" id="PRU00434"/>
    </source>
</evidence>
<evidence type="ECO:0000305" key="3"/>
<proteinExistence type="inferred from homology"/>